<proteinExistence type="inferred from homology"/>
<accession>Q2KUI9</accession>
<reference key="1">
    <citation type="journal article" date="2006" name="J. Bacteriol.">
        <title>Comparison of the genome sequence of the poultry pathogen Bordetella avium with those of B. bronchiseptica, B. pertussis, and B. parapertussis reveals extensive diversity in surface structures associated with host interaction.</title>
        <authorList>
            <person name="Sebaihia M."/>
            <person name="Preston A."/>
            <person name="Maskell D.J."/>
            <person name="Kuzmiak H."/>
            <person name="Connell T.D."/>
            <person name="King N.D."/>
            <person name="Orndorff P.E."/>
            <person name="Miyamoto D.M."/>
            <person name="Thomson N.R."/>
            <person name="Harris D."/>
            <person name="Goble A."/>
            <person name="Lord A."/>
            <person name="Murphy L."/>
            <person name="Quail M.A."/>
            <person name="Rutter S."/>
            <person name="Squares R."/>
            <person name="Squares S."/>
            <person name="Woodward J."/>
            <person name="Parkhill J."/>
            <person name="Temple L.M."/>
        </authorList>
    </citation>
    <scope>NUCLEOTIDE SEQUENCE [LARGE SCALE GENOMIC DNA]</scope>
    <source>
        <strain>197N</strain>
    </source>
</reference>
<keyword id="KW-0145">Chemotaxis</keyword>
<keyword id="KW-0378">Hydrolase</keyword>
<keyword id="KW-1185">Reference proteome</keyword>
<evidence type="ECO:0000255" key="1">
    <source>
        <dbReference type="HAMAP-Rule" id="MF_01440"/>
    </source>
</evidence>
<sequence length="226" mass="25217">MSVRLDARASRHYYDSTFERHAVKILPNEYFVTKGEDLMLSTVLGSCVAACLRDPLTGIGGMNHFMLPDGDAQSPASATMRYGAFAMEVLINELLKAGAARDRLEAKVFGGGAVLSAMQQMNIGERNGQFVLSYLKTENIPVRAQDLGDTHARRIHYFPFDGRVLVRKMAPHHAKAEEVIAHREKLAAQKAQDNSRSAPRIERFDAPKMKVEMFKRPLRRTANAES</sequence>
<feature type="chain" id="PRO_0000251006" description="Probable chemoreceptor glutamine deamidase CheD">
    <location>
        <begin position="1"/>
        <end position="226"/>
    </location>
</feature>
<organism>
    <name type="scientific">Bordetella avium (strain 197N)</name>
    <dbReference type="NCBI Taxonomy" id="360910"/>
    <lineage>
        <taxon>Bacteria</taxon>
        <taxon>Pseudomonadati</taxon>
        <taxon>Pseudomonadota</taxon>
        <taxon>Betaproteobacteria</taxon>
        <taxon>Burkholderiales</taxon>
        <taxon>Alcaligenaceae</taxon>
        <taxon>Bordetella</taxon>
    </lineage>
</organism>
<dbReference type="EC" id="3.5.1.44" evidence="1"/>
<dbReference type="EMBL" id="AM167904">
    <property type="protein sequence ID" value="CAJ50671.1"/>
    <property type="molecule type" value="Genomic_DNA"/>
</dbReference>
<dbReference type="RefSeq" id="WP_012418699.1">
    <property type="nucleotide sequence ID" value="NC_010645.1"/>
</dbReference>
<dbReference type="SMR" id="Q2KUI9"/>
<dbReference type="STRING" id="360910.BAV3061"/>
<dbReference type="KEGG" id="bav:BAV3061"/>
<dbReference type="eggNOG" id="COG1871">
    <property type="taxonomic scope" value="Bacteria"/>
</dbReference>
<dbReference type="HOGENOM" id="CLU_087854_0_0_4"/>
<dbReference type="OrthoDB" id="9807202at2"/>
<dbReference type="Proteomes" id="UP000001977">
    <property type="component" value="Chromosome"/>
</dbReference>
<dbReference type="GO" id="GO:0050568">
    <property type="term" value="F:protein-glutamine glutaminase activity"/>
    <property type="evidence" value="ECO:0007669"/>
    <property type="project" value="UniProtKB-UniRule"/>
</dbReference>
<dbReference type="GO" id="GO:0006935">
    <property type="term" value="P:chemotaxis"/>
    <property type="evidence" value="ECO:0007669"/>
    <property type="project" value="UniProtKB-UniRule"/>
</dbReference>
<dbReference type="CDD" id="cd16352">
    <property type="entry name" value="CheD"/>
    <property type="match status" value="1"/>
</dbReference>
<dbReference type="Gene3D" id="3.30.1330.200">
    <property type="match status" value="1"/>
</dbReference>
<dbReference type="HAMAP" id="MF_01440">
    <property type="entry name" value="CheD"/>
    <property type="match status" value="1"/>
</dbReference>
<dbReference type="InterPro" id="IPR038592">
    <property type="entry name" value="CheD-like_sf"/>
</dbReference>
<dbReference type="InterPro" id="IPR005659">
    <property type="entry name" value="Chemorcpt_Glu_NH3ase_CheD"/>
</dbReference>
<dbReference type="InterPro" id="IPR011324">
    <property type="entry name" value="Cytotoxic_necrot_fac-like_cat"/>
</dbReference>
<dbReference type="NCBIfam" id="NF010013">
    <property type="entry name" value="PRK13487.1"/>
    <property type="match status" value="1"/>
</dbReference>
<dbReference type="NCBIfam" id="NF010014">
    <property type="entry name" value="PRK13489.1"/>
    <property type="match status" value="1"/>
</dbReference>
<dbReference type="PANTHER" id="PTHR35147">
    <property type="entry name" value="CHEMORECEPTOR GLUTAMINE DEAMIDASE CHED-RELATED"/>
    <property type="match status" value="1"/>
</dbReference>
<dbReference type="PANTHER" id="PTHR35147:SF2">
    <property type="entry name" value="CHEMORECEPTOR GLUTAMINE DEAMIDASE CHED-RELATED"/>
    <property type="match status" value="1"/>
</dbReference>
<dbReference type="Pfam" id="PF03975">
    <property type="entry name" value="CheD"/>
    <property type="match status" value="1"/>
</dbReference>
<dbReference type="SUPFAM" id="SSF64438">
    <property type="entry name" value="CNF1/YfiH-like putative cysteine hydrolases"/>
    <property type="match status" value="1"/>
</dbReference>
<name>CHED_BORA1</name>
<gene>
    <name evidence="1" type="primary">cheD</name>
    <name type="ordered locus">BAV3061</name>
</gene>
<protein>
    <recommendedName>
        <fullName evidence="1">Probable chemoreceptor glutamine deamidase CheD</fullName>
        <ecNumber evidence="1">3.5.1.44</ecNumber>
    </recommendedName>
</protein>
<comment type="function">
    <text evidence="1">Probably deamidates glutamine residues to glutamate on methyl-accepting chemotaxis receptors (MCPs), playing an important role in chemotaxis.</text>
</comment>
<comment type="catalytic activity">
    <reaction evidence="1">
        <text>L-glutaminyl-[protein] + H2O = L-glutamyl-[protein] + NH4(+)</text>
        <dbReference type="Rhea" id="RHEA:16441"/>
        <dbReference type="Rhea" id="RHEA-COMP:10207"/>
        <dbReference type="Rhea" id="RHEA-COMP:10208"/>
        <dbReference type="ChEBI" id="CHEBI:15377"/>
        <dbReference type="ChEBI" id="CHEBI:28938"/>
        <dbReference type="ChEBI" id="CHEBI:29973"/>
        <dbReference type="ChEBI" id="CHEBI:30011"/>
        <dbReference type="EC" id="3.5.1.44"/>
    </reaction>
</comment>
<comment type="similarity">
    <text evidence="1">Belongs to the CheD family.</text>
</comment>